<protein>
    <recommendedName>
        <fullName evidence="1">Redox-sensing transcriptional repressor Rex</fullName>
    </recommendedName>
</protein>
<comment type="function">
    <text evidence="1">Modulates transcription in response to changes in cellular NADH/NAD(+) redox state.</text>
</comment>
<comment type="subunit">
    <text evidence="1">Homodimer.</text>
</comment>
<comment type="subcellular location">
    <subcellularLocation>
        <location evidence="1">Cytoplasm</location>
    </subcellularLocation>
</comment>
<comment type="similarity">
    <text evidence="1">Belongs to the transcriptional regulatory Rex family.</text>
</comment>
<feature type="chain" id="PRO_1000065428" description="Redox-sensing transcriptional repressor Rex">
    <location>
        <begin position="1"/>
        <end position="211"/>
    </location>
</feature>
<feature type="DNA-binding region" description="H-T-H motif" evidence="1">
    <location>
        <begin position="13"/>
        <end position="52"/>
    </location>
</feature>
<feature type="binding site" evidence="1">
    <location>
        <begin position="87"/>
        <end position="92"/>
    </location>
    <ligand>
        <name>NAD(+)</name>
        <dbReference type="ChEBI" id="CHEBI:57540"/>
    </ligand>
</feature>
<feature type="helix" evidence="2">
    <location>
        <begin position="5"/>
        <end position="24"/>
    </location>
</feature>
<feature type="helix" evidence="2">
    <location>
        <begin position="31"/>
        <end position="38"/>
    </location>
</feature>
<feature type="helix" evidence="2">
    <location>
        <begin position="42"/>
        <end position="50"/>
    </location>
</feature>
<feature type="turn" evidence="2">
    <location>
        <begin position="58"/>
        <end position="60"/>
    </location>
</feature>
<feature type="helix" evidence="2">
    <location>
        <begin position="64"/>
        <end position="74"/>
    </location>
</feature>
<feature type="turn" evidence="3">
    <location>
        <begin position="76"/>
        <end position="78"/>
    </location>
</feature>
<feature type="strand" evidence="2">
    <location>
        <begin position="81"/>
        <end position="86"/>
    </location>
</feature>
<feature type="helix" evidence="2">
    <location>
        <begin position="90"/>
        <end position="96"/>
    </location>
</feature>
<feature type="turn" evidence="3">
    <location>
        <begin position="102"/>
        <end position="104"/>
    </location>
</feature>
<feature type="strand" evidence="2">
    <location>
        <begin position="105"/>
        <end position="112"/>
    </location>
</feature>
<feature type="turn" evidence="2">
    <location>
        <begin position="115"/>
        <end position="119"/>
    </location>
</feature>
<feature type="strand" evidence="2">
    <location>
        <begin position="125"/>
        <end position="129"/>
    </location>
</feature>
<feature type="helix" evidence="2">
    <location>
        <begin position="130"/>
        <end position="135"/>
    </location>
</feature>
<feature type="turn" evidence="2">
    <location>
        <begin position="138"/>
        <end position="140"/>
    </location>
</feature>
<feature type="strand" evidence="2">
    <location>
        <begin position="143"/>
        <end position="146"/>
    </location>
</feature>
<feature type="helix" evidence="2">
    <location>
        <begin position="150"/>
        <end position="152"/>
    </location>
</feature>
<feature type="helix" evidence="2">
    <location>
        <begin position="153"/>
        <end position="162"/>
    </location>
</feature>
<feature type="strand" evidence="2">
    <location>
        <begin position="166"/>
        <end position="170"/>
    </location>
</feature>
<feature type="strand" evidence="2">
    <location>
        <begin position="172"/>
        <end position="174"/>
    </location>
</feature>
<feature type="strand" evidence="2">
    <location>
        <begin position="182"/>
        <end position="186"/>
    </location>
</feature>
<feature type="helix" evidence="2">
    <location>
        <begin position="189"/>
        <end position="201"/>
    </location>
</feature>
<feature type="turn" evidence="2">
    <location>
        <begin position="203"/>
        <end position="205"/>
    </location>
</feature>
<sequence length="211" mass="23222">MKVPEAAISRLITYLRILEELEAQGVHRTSSEQLGELAQVTAFQVRKDLSYFGSYGTRGVGYTVPVLKRELRHILGLNRKWGLCIVGMGRLGSALADYPGFGESFELRGFFDVDPEKVGRPVRGGVIEHVDLLPQRVPGRIEIALLTVPREAAQKAADLLVAAGIKGILNFAPVVLEVPKEVAVENVDFLAGLTRLSFAILNPKWREEMMG</sequence>
<proteinExistence type="evidence at protein level"/>
<keyword id="KW-0002">3D-structure</keyword>
<keyword id="KW-0963">Cytoplasm</keyword>
<keyword id="KW-0238">DNA-binding</keyword>
<keyword id="KW-0520">NAD</keyword>
<keyword id="KW-0678">Repressor</keyword>
<keyword id="KW-0804">Transcription</keyword>
<keyword id="KW-0805">Transcription regulation</keyword>
<organism>
    <name type="scientific">Thermus thermophilus (strain ATCC BAA-163 / DSM 7039 / HB27)</name>
    <dbReference type="NCBI Taxonomy" id="262724"/>
    <lineage>
        <taxon>Bacteria</taxon>
        <taxon>Thermotogati</taxon>
        <taxon>Deinococcota</taxon>
        <taxon>Deinococci</taxon>
        <taxon>Thermales</taxon>
        <taxon>Thermaceae</taxon>
        <taxon>Thermus</taxon>
    </lineage>
</organism>
<dbReference type="EMBL" id="AE017221">
    <property type="protein sequence ID" value="AAS81635.1"/>
    <property type="molecule type" value="Genomic_DNA"/>
</dbReference>
<dbReference type="RefSeq" id="WP_011173693.1">
    <property type="nucleotide sequence ID" value="NC_005835.1"/>
</dbReference>
<dbReference type="PDB" id="3IKT">
    <property type="method" value="X-ray"/>
    <property type="resolution" value="2.26 A"/>
    <property type="chains" value="A/B=1-206"/>
</dbReference>
<dbReference type="PDB" id="3IKV">
    <property type="method" value="X-ray"/>
    <property type="resolution" value="2.40 A"/>
    <property type="chains" value="A/B=1-206"/>
</dbReference>
<dbReference type="PDB" id="3IL2">
    <property type="method" value="X-ray"/>
    <property type="resolution" value="2.49 A"/>
    <property type="chains" value="A/B=1-206"/>
</dbReference>
<dbReference type="PDBsum" id="3IKT"/>
<dbReference type="PDBsum" id="3IKV"/>
<dbReference type="PDBsum" id="3IL2"/>
<dbReference type="SMR" id="Q72I39"/>
<dbReference type="GeneID" id="3168513"/>
<dbReference type="KEGG" id="tth:TT_C1293"/>
<dbReference type="eggNOG" id="COG2344">
    <property type="taxonomic scope" value="Bacteria"/>
</dbReference>
<dbReference type="HOGENOM" id="CLU_061534_1_0_0"/>
<dbReference type="OrthoDB" id="9784760at2"/>
<dbReference type="EvolutionaryTrace" id="Q72I39"/>
<dbReference type="Proteomes" id="UP000000592">
    <property type="component" value="Chromosome"/>
</dbReference>
<dbReference type="GO" id="GO:0005737">
    <property type="term" value="C:cytoplasm"/>
    <property type="evidence" value="ECO:0007669"/>
    <property type="project" value="UniProtKB-SubCell"/>
</dbReference>
<dbReference type="GO" id="GO:0003677">
    <property type="term" value="F:DNA binding"/>
    <property type="evidence" value="ECO:0007669"/>
    <property type="project" value="UniProtKB-UniRule"/>
</dbReference>
<dbReference type="GO" id="GO:0003700">
    <property type="term" value="F:DNA-binding transcription factor activity"/>
    <property type="evidence" value="ECO:0007669"/>
    <property type="project" value="UniProtKB-UniRule"/>
</dbReference>
<dbReference type="GO" id="GO:0045892">
    <property type="term" value="P:negative regulation of DNA-templated transcription"/>
    <property type="evidence" value="ECO:0007669"/>
    <property type="project" value="InterPro"/>
</dbReference>
<dbReference type="GO" id="GO:0051775">
    <property type="term" value="P:response to redox state"/>
    <property type="evidence" value="ECO:0007669"/>
    <property type="project" value="InterPro"/>
</dbReference>
<dbReference type="Gene3D" id="3.40.50.720">
    <property type="entry name" value="NAD(P)-binding Rossmann-like Domain"/>
    <property type="match status" value="1"/>
</dbReference>
<dbReference type="Gene3D" id="1.10.10.10">
    <property type="entry name" value="Winged helix-like DNA-binding domain superfamily/Winged helix DNA-binding domain"/>
    <property type="match status" value="1"/>
</dbReference>
<dbReference type="HAMAP" id="MF_01131">
    <property type="entry name" value="Rex"/>
    <property type="match status" value="1"/>
</dbReference>
<dbReference type="InterPro" id="IPR003781">
    <property type="entry name" value="CoA-bd"/>
</dbReference>
<dbReference type="InterPro" id="IPR036291">
    <property type="entry name" value="NAD(P)-bd_dom_sf"/>
</dbReference>
<dbReference type="InterPro" id="IPR009718">
    <property type="entry name" value="Rex_DNA-bd_C_dom"/>
</dbReference>
<dbReference type="InterPro" id="IPR022876">
    <property type="entry name" value="Tscrpt_rep_Rex"/>
</dbReference>
<dbReference type="InterPro" id="IPR036388">
    <property type="entry name" value="WH-like_DNA-bd_sf"/>
</dbReference>
<dbReference type="InterPro" id="IPR036390">
    <property type="entry name" value="WH_DNA-bd_sf"/>
</dbReference>
<dbReference type="NCBIfam" id="NF003992">
    <property type="entry name" value="PRK05472.2-1"/>
    <property type="match status" value="1"/>
</dbReference>
<dbReference type="NCBIfam" id="NF003993">
    <property type="entry name" value="PRK05472.2-2"/>
    <property type="match status" value="1"/>
</dbReference>
<dbReference type="NCBIfam" id="NF003994">
    <property type="entry name" value="PRK05472.2-3"/>
    <property type="match status" value="1"/>
</dbReference>
<dbReference type="NCBIfam" id="NF003995">
    <property type="entry name" value="PRK05472.2-4"/>
    <property type="match status" value="1"/>
</dbReference>
<dbReference type="NCBIfam" id="NF003996">
    <property type="entry name" value="PRK05472.2-5"/>
    <property type="match status" value="1"/>
</dbReference>
<dbReference type="PANTHER" id="PTHR35786">
    <property type="entry name" value="REDOX-SENSING TRANSCRIPTIONAL REPRESSOR REX"/>
    <property type="match status" value="1"/>
</dbReference>
<dbReference type="PANTHER" id="PTHR35786:SF1">
    <property type="entry name" value="REDOX-SENSING TRANSCRIPTIONAL REPRESSOR REX 1"/>
    <property type="match status" value="1"/>
</dbReference>
<dbReference type="Pfam" id="PF02629">
    <property type="entry name" value="CoA_binding"/>
    <property type="match status" value="1"/>
</dbReference>
<dbReference type="Pfam" id="PF06971">
    <property type="entry name" value="Put_DNA-bind_N"/>
    <property type="match status" value="1"/>
</dbReference>
<dbReference type="SMART" id="SM00881">
    <property type="entry name" value="CoA_binding"/>
    <property type="match status" value="1"/>
</dbReference>
<dbReference type="SUPFAM" id="SSF51735">
    <property type="entry name" value="NAD(P)-binding Rossmann-fold domains"/>
    <property type="match status" value="1"/>
</dbReference>
<dbReference type="SUPFAM" id="SSF46785">
    <property type="entry name" value="Winged helix' DNA-binding domain"/>
    <property type="match status" value="1"/>
</dbReference>
<reference key="1">
    <citation type="journal article" date="2004" name="Nat. Biotechnol.">
        <title>The genome sequence of the extreme thermophile Thermus thermophilus.</title>
        <authorList>
            <person name="Henne A."/>
            <person name="Brueggemann H."/>
            <person name="Raasch C."/>
            <person name="Wiezer A."/>
            <person name="Hartsch T."/>
            <person name="Liesegang H."/>
            <person name="Johann A."/>
            <person name="Lienard T."/>
            <person name="Gohl O."/>
            <person name="Martinez-Arias R."/>
            <person name="Jacobi C."/>
            <person name="Starkuviene V."/>
            <person name="Schlenczeck S."/>
            <person name="Dencker S."/>
            <person name="Huber R."/>
            <person name="Klenk H.-P."/>
            <person name="Kramer W."/>
            <person name="Merkl R."/>
            <person name="Gottschalk G."/>
            <person name="Fritz H.-J."/>
        </authorList>
    </citation>
    <scope>NUCLEOTIDE SEQUENCE [LARGE SCALE GENOMIC DNA]</scope>
    <source>
        <strain>ATCC BAA-163 / DSM 7039 / HB27</strain>
    </source>
</reference>
<name>REX_THET2</name>
<accession>Q72I39</accession>
<evidence type="ECO:0000255" key="1">
    <source>
        <dbReference type="HAMAP-Rule" id="MF_01131"/>
    </source>
</evidence>
<evidence type="ECO:0007829" key="2">
    <source>
        <dbReference type="PDB" id="3IKT"/>
    </source>
</evidence>
<evidence type="ECO:0007829" key="3">
    <source>
        <dbReference type="PDB" id="3IKV"/>
    </source>
</evidence>
<gene>
    <name evidence="1" type="primary">rex</name>
    <name type="ordered locus">TT_C1293</name>
</gene>